<dbReference type="EMBL" id="CP000814">
    <property type="protein sequence ID" value="ABV51698.1"/>
    <property type="molecule type" value="Genomic_DNA"/>
</dbReference>
<dbReference type="RefSeq" id="WP_002866727.1">
    <property type="nucleotide sequence ID" value="NC_009839.1"/>
</dbReference>
<dbReference type="SMR" id="A8FJR1"/>
<dbReference type="KEGG" id="cju:C8J_0099"/>
<dbReference type="HOGENOM" id="CLU_050669_0_1_7"/>
<dbReference type="GO" id="GO:0005886">
    <property type="term" value="C:plasma membrane"/>
    <property type="evidence" value="ECO:0007669"/>
    <property type="project" value="UniProtKB-SubCell"/>
</dbReference>
<dbReference type="GO" id="GO:0045259">
    <property type="term" value="C:proton-transporting ATP synthase complex"/>
    <property type="evidence" value="ECO:0007669"/>
    <property type="project" value="UniProtKB-KW"/>
</dbReference>
<dbReference type="GO" id="GO:0005524">
    <property type="term" value="F:ATP binding"/>
    <property type="evidence" value="ECO:0007669"/>
    <property type="project" value="UniProtKB-UniRule"/>
</dbReference>
<dbReference type="GO" id="GO:0046933">
    <property type="term" value="F:proton-transporting ATP synthase activity, rotational mechanism"/>
    <property type="evidence" value="ECO:0007669"/>
    <property type="project" value="UniProtKB-UniRule"/>
</dbReference>
<dbReference type="GO" id="GO:0042777">
    <property type="term" value="P:proton motive force-driven plasma membrane ATP synthesis"/>
    <property type="evidence" value="ECO:0007669"/>
    <property type="project" value="UniProtKB-UniRule"/>
</dbReference>
<dbReference type="CDD" id="cd12151">
    <property type="entry name" value="F1-ATPase_gamma"/>
    <property type="match status" value="1"/>
</dbReference>
<dbReference type="FunFam" id="3.40.1380.10:FF:000006">
    <property type="entry name" value="ATP synthase gamma chain"/>
    <property type="match status" value="1"/>
</dbReference>
<dbReference type="Gene3D" id="3.40.1380.10">
    <property type="match status" value="1"/>
</dbReference>
<dbReference type="Gene3D" id="1.10.287.80">
    <property type="entry name" value="ATP synthase, gamma subunit, helix hairpin domain"/>
    <property type="match status" value="1"/>
</dbReference>
<dbReference type="HAMAP" id="MF_00815">
    <property type="entry name" value="ATP_synth_gamma_bact"/>
    <property type="match status" value="1"/>
</dbReference>
<dbReference type="InterPro" id="IPR035968">
    <property type="entry name" value="ATP_synth_F1_ATPase_gsu"/>
</dbReference>
<dbReference type="InterPro" id="IPR000131">
    <property type="entry name" value="ATP_synth_F1_gsu"/>
</dbReference>
<dbReference type="NCBIfam" id="TIGR01146">
    <property type="entry name" value="ATPsyn_F1gamma"/>
    <property type="match status" value="1"/>
</dbReference>
<dbReference type="PANTHER" id="PTHR11693">
    <property type="entry name" value="ATP SYNTHASE GAMMA CHAIN"/>
    <property type="match status" value="1"/>
</dbReference>
<dbReference type="PANTHER" id="PTHR11693:SF22">
    <property type="entry name" value="ATP SYNTHASE SUBUNIT GAMMA, MITOCHONDRIAL"/>
    <property type="match status" value="1"/>
</dbReference>
<dbReference type="Pfam" id="PF00231">
    <property type="entry name" value="ATP-synt"/>
    <property type="match status" value="1"/>
</dbReference>
<dbReference type="PRINTS" id="PR00126">
    <property type="entry name" value="ATPASEGAMMA"/>
</dbReference>
<dbReference type="SUPFAM" id="SSF52943">
    <property type="entry name" value="ATP synthase (F1-ATPase), gamma subunit"/>
    <property type="match status" value="1"/>
</dbReference>
<reference key="1">
    <citation type="journal article" date="2007" name="J. Bacteriol.">
        <title>The complete genome sequence of Campylobacter jejuni strain 81116 (NCTC11828).</title>
        <authorList>
            <person name="Pearson B.M."/>
            <person name="Gaskin D.J.H."/>
            <person name="Segers R.P.A.M."/>
            <person name="Wells J.M."/>
            <person name="Nuijten P.J.M."/>
            <person name="van Vliet A.H.M."/>
        </authorList>
    </citation>
    <scope>NUCLEOTIDE SEQUENCE [LARGE SCALE GENOMIC DNA]</scope>
    <source>
        <strain>81116 / NCTC 11828</strain>
    </source>
</reference>
<comment type="function">
    <text evidence="1">Produces ATP from ADP in the presence of a proton gradient across the membrane. The gamma chain is believed to be important in regulating ATPase activity and the flow of protons through the CF(0) complex.</text>
</comment>
<comment type="subunit">
    <text evidence="1">F-type ATPases have 2 components, CF(1) - the catalytic core - and CF(0) - the membrane proton channel. CF(1) has five subunits: alpha(3), beta(3), gamma(1), delta(1), epsilon(1). CF(0) has three main subunits: a, b and c.</text>
</comment>
<comment type="subcellular location">
    <subcellularLocation>
        <location evidence="1">Cell inner membrane</location>
        <topology evidence="1">Peripheral membrane protein</topology>
    </subcellularLocation>
</comment>
<comment type="similarity">
    <text evidence="1">Belongs to the ATPase gamma chain family.</text>
</comment>
<organism>
    <name type="scientific">Campylobacter jejuni subsp. jejuni serotype O:6 (strain 81116 / NCTC 11828)</name>
    <dbReference type="NCBI Taxonomy" id="407148"/>
    <lineage>
        <taxon>Bacteria</taxon>
        <taxon>Pseudomonadati</taxon>
        <taxon>Campylobacterota</taxon>
        <taxon>Epsilonproteobacteria</taxon>
        <taxon>Campylobacterales</taxon>
        <taxon>Campylobacteraceae</taxon>
        <taxon>Campylobacter</taxon>
    </lineage>
</organism>
<sequence length="294" mass="33631">MSNLKEIKRKIKSVHNTQKTTNAMKLVSTAKLKKAEEAAKRSKIYAQKIDEILSEISFQINKIVHNEDDVRLSLFHKKEQIKTVDLIFITADKGLCGGFNIKTLKAVSEMLKEYEAKNINIRLRAIGKTGIEYFNFQKIELLEKYFHLSSSPDYEKACEVIHAAVDDFLNGNTDEVILVHNGYKNMITQELKINHLIPVEPKSIEQTHNSLLELEPEGTELLEDLMKTYFEYNMYYALIDSLAAEHSARMQAMDNATNNAKARVKQLNLAYNKARQESITTELIEIISGVESMK</sequence>
<proteinExistence type="inferred from homology"/>
<gene>
    <name evidence="1" type="primary">atpG</name>
    <name type="ordered locus">C8J_0099</name>
</gene>
<keyword id="KW-0066">ATP synthesis</keyword>
<keyword id="KW-0997">Cell inner membrane</keyword>
<keyword id="KW-1003">Cell membrane</keyword>
<keyword id="KW-0139">CF(1)</keyword>
<keyword id="KW-0375">Hydrogen ion transport</keyword>
<keyword id="KW-0406">Ion transport</keyword>
<keyword id="KW-0472">Membrane</keyword>
<keyword id="KW-0813">Transport</keyword>
<feature type="chain" id="PRO_1000072859" description="ATP synthase gamma chain">
    <location>
        <begin position="1"/>
        <end position="294"/>
    </location>
</feature>
<name>ATPG_CAMJ8</name>
<protein>
    <recommendedName>
        <fullName evidence="1">ATP synthase gamma chain</fullName>
    </recommendedName>
    <alternativeName>
        <fullName evidence="1">ATP synthase F1 sector gamma subunit</fullName>
    </alternativeName>
    <alternativeName>
        <fullName evidence="1">F-ATPase gamma subunit</fullName>
    </alternativeName>
</protein>
<accession>A8FJR1</accession>
<evidence type="ECO:0000255" key="1">
    <source>
        <dbReference type="HAMAP-Rule" id="MF_00815"/>
    </source>
</evidence>